<reference key="1">
    <citation type="submission" date="2002-12" db="EMBL/GenBank/DDBJ databases">
        <title>Complete genome sequence of Vibrio vulnificus CMCP6.</title>
        <authorList>
            <person name="Rhee J.H."/>
            <person name="Kim S.Y."/>
            <person name="Chung S.S."/>
            <person name="Kim J.J."/>
            <person name="Moon Y.H."/>
            <person name="Jeong H."/>
            <person name="Choy H.E."/>
        </authorList>
    </citation>
    <scope>NUCLEOTIDE SEQUENCE [LARGE SCALE GENOMIC DNA]</scope>
    <source>
        <strain>CMCP6</strain>
    </source>
</reference>
<dbReference type="EMBL" id="AE016796">
    <property type="protein sequence ID" value="AAO08081.2"/>
    <property type="molecule type" value="Genomic_DNA"/>
</dbReference>
<dbReference type="RefSeq" id="WP_011082076.1">
    <property type="nucleotide sequence ID" value="NC_004460.2"/>
</dbReference>
<dbReference type="SMR" id="Q8D4V5"/>
<dbReference type="KEGG" id="vvu:VV2_1184"/>
<dbReference type="HOGENOM" id="CLU_062974_2_0_6"/>
<dbReference type="Proteomes" id="UP000002275">
    <property type="component" value="Chromosome 2"/>
</dbReference>
<dbReference type="GO" id="GO:0005829">
    <property type="term" value="C:cytosol"/>
    <property type="evidence" value="ECO:0007669"/>
    <property type="project" value="TreeGrafter"/>
</dbReference>
<dbReference type="GO" id="GO:0003677">
    <property type="term" value="F:DNA binding"/>
    <property type="evidence" value="ECO:0007669"/>
    <property type="project" value="UniProtKB-UniRule"/>
</dbReference>
<dbReference type="GO" id="GO:0006355">
    <property type="term" value="P:regulation of DNA-templated transcription"/>
    <property type="evidence" value="ECO:0007669"/>
    <property type="project" value="UniProtKB-UniRule"/>
</dbReference>
<dbReference type="FunFam" id="1.10.10.200:FF:000003">
    <property type="entry name" value="Probable transcriptional regulatory protein YeeN"/>
    <property type="match status" value="1"/>
</dbReference>
<dbReference type="Gene3D" id="1.10.10.200">
    <property type="match status" value="1"/>
</dbReference>
<dbReference type="Gene3D" id="3.30.70.980">
    <property type="match status" value="2"/>
</dbReference>
<dbReference type="HAMAP" id="MF_00693">
    <property type="entry name" value="Transcrip_reg_TACO1"/>
    <property type="match status" value="1"/>
</dbReference>
<dbReference type="InterPro" id="IPR017856">
    <property type="entry name" value="Integrase-like_N"/>
</dbReference>
<dbReference type="InterPro" id="IPR048300">
    <property type="entry name" value="TACO1_YebC-like_2nd/3rd_dom"/>
</dbReference>
<dbReference type="InterPro" id="IPR049083">
    <property type="entry name" value="TACO1_YebC_N"/>
</dbReference>
<dbReference type="InterPro" id="IPR002876">
    <property type="entry name" value="Transcrip_reg_TACO1-like"/>
</dbReference>
<dbReference type="InterPro" id="IPR026564">
    <property type="entry name" value="Transcrip_reg_TACO1-like_dom3"/>
</dbReference>
<dbReference type="InterPro" id="IPR029072">
    <property type="entry name" value="YebC-like"/>
</dbReference>
<dbReference type="NCBIfam" id="NF009044">
    <property type="entry name" value="PRK12378.1"/>
    <property type="match status" value="1"/>
</dbReference>
<dbReference type="PANTHER" id="PTHR12532">
    <property type="entry name" value="TRANSLATIONAL ACTIVATOR OF CYTOCHROME C OXIDASE 1"/>
    <property type="match status" value="1"/>
</dbReference>
<dbReference type="PANTHER" id="PTHR12532:SF0">
    <property type="entry name" value="TRANSLATIONAL ACTIVATOR OF CYTOCHROME C OXIDASE 1"/>
    <property type="match status" value="1"/>
</dbReference>
<dbReference type="Pfam" id="PF20772">
    <property type="entry name" value="TACO1_YebC_N"/>
    <property type="match status" value="1"/>
</dbReference>
<dbReference type="Pfam" id="PF01709">
    <property type="entry name" value="Transcrip_reg"/>
    <property type="match status" value="1"/>
</dbReference>
<dbReference type="SUPFAM" id="SSF75625">
    <property type="entry name" value="YebC-like"/>
    <property type="match status" value="1"/>
</dbReference>
<sequence>MGRSFEVRKASMAKTAGAKIKVYSKYGKEIYVCAKNGGIDPDMNLSLRHLITKAKKDQVPSHVIEKALDKASGGGGEDYQPARYEGFGPGGISVIVDCLTDNGNRTFQDVRQCFVKTGAKIGTPGVVAHMFDHQAVFQFKGDDEESFLEALMMADCDVTDIELEDGVITIYAPNTEFFKVKTALNTEFPDLVIDVEEITFVPQNYSPVPEEDAEKFQKFLDMLDDCDDVQQVYHNAEM</sequence>
<accession>Q8D4V5</accession>
<name>Y5184_VIBVU</name>
<protein>
    <recommendedName>
        <fullName evidence="1">Probable transcriptional regulatory protein VV2_1184</fullName>
    </recommendedName>
</protein>
<gene>
    <name type="ordered locus">VV2_1184</name>
</gene>
<keyword id="KW-0963">Cytoplasm</keyword>
<keyword id="KW-0238">DNA-binding</keyword>
<keyword id="KW-0804">Transcription</keyword>
<keyword id="KW-0805">Transcription regulation</keyword>
<feature type="chain" id="PRO_0000175929" description="Probable transcriptional regulatory protein VV2_1184">
    <location>
        <begin position="1"/>
        <end position="238"/>
    </location>
</feature>
<comment type="subcellular location">
    <subcellularLocation>
        <location evidence="1">Cytoplasm</location>
    </subcellularLocation>
</comment>
<comment type="similarity">
    <text evidence="1">Belongs to the TACO1 family.</text>
</comment>
<proteinExistence type="inferred from homology"/>
<organism>
    <name type="scientific">Vibrio vulnificus (strain CMCP6)</name>
    <dbReference type="NCBI Taxonomy" id="216895"/>
    <lineage>
        <taxon>Bacteria</taxon>
        <taxon>Pseudomonadati</taxon>
        <taxon>Pseudomonadota</taxon>
        <taxon>Gammaproteobacteria</taxon>
        <taxon>Vibrionales</taxon>
        <taxon>Vibrionaceae</taxon>
        <taxon>Vibrio</taxon>
    </lineage>
</organism>
<evidence type="ECO:0000255" key="1">
    <source>
        <dbReference type="HAMAP-Rule" id="MF_00693"/>
    </source>
</evidence>